<dbReference type="EC" id="2.2.1.2" evidence="1"/>
<dbReference type="EMBL" id="CP000724">
    <property type="protein sequence ID" value="ABR46549.1"/>
    <property type="molecule type" value="Genomic_DNA"/>
</dbReference>
<dbReference type="RefSeq" id="WP_011971457.1">
    <property type="nucleotide sequence ID" value="NC_009633.1"/>
</dbReference>
<dbReference type="SMR" id="A6TK31"/>
<dbReference type="STRING" id="293826.Amet_0319"/>
<dbReference type="KEGG" id="amt:Amet_0319"/>
<dbReference type="eggNOG" id="COG0176">
    <property type="taxonomic scope" value="Bacteria"/>
</dbReference>
<dbReference type="HOGENOM" id="CLU_079764_0_0_9"/>
<dbReference type="OrthoDB" id="9807051at2"/>
<dbReference type="UniPathway" id="UPA00115">
    <property type="reaction ID" value="UER00414"/>
</dbReference>
<dbReference type="Proteomes" id="UP000001572">
    <property type="component" value="Chromosome"/>
</dbReference>
<dbReference type="GO" id="GO:0005737">
    <property type="term" value="C:cytoplasm"/>
    <property type="evidence" value="ECO:0007669"/>
    <property type="project" value="UniProtKB-SubCell"/>
</dbReference>
<dbReference type="GO" id="GO:0016832">
    <property type="term" value="F:aldehyde-lyase activity"/>
    <property type="evidence" value="ECO:0007669"/>
    <property type="project" value="InterPro"/>
</dbReference>
<dbReference type="GO" id="GO:0004801">
    <property type="term" value="F:transaldolase activity"/>
    <property type="evidence" value="ECO:0007669"/>
    <property type="project" value="UniProtKB-UniRule"/>
</dbReference>
<dbReference type="GO" id="GO:0005975">
    <property type="term" value="P:carbohydrate metabolic process"/>
    <property type="evidence" value="ECO:0007669"/>
    <property type="project" value="InterPro"/>
</dbReference>
<dbReference type="GO" id="GO:0006098">
    <property type="term" value="P:pentose-phosphate shunt"/>
    <property type="evidence" value="ECO:0007669"/>
    <property type="project" value="UniProtKB-UniRule"/>
</dbReference>
<dbReference type="CDD" id="cd00956">
    <property type="entry name" value="Transaldolase_FSA"/>
    <property type="match status" value="1"/>
</dbReference>
<dbReference type="FunFam" id="3.20.20.70:FF:000018">
    <property type="entry name" value="Probable transaldolase"/>
    <property type="match status" value="1"/>
</dbReference>
<dbReference type="Gene3D" id="3.20.20.70">
    <property type="entry name" value="Aldolase class I"/>
    <property type="match status" value="1"/>
</dbReference>
<dbReference type="HAMAP" id="MF_00494">
    <property type="entry name" value="Transaldolase_3b"/>
    <property type="match status" value="1"/>
</dbReference>
<dbReference type="InterPro" id="IPR013785">
    <property type="entry name" value="Aldolase_TIM"/>
</dbReference>
<dbReference type="InterPro" id="IPR001585">
    <property type="entry name" value="TAL/FSA"/>
</dbReference>
<dbReference type="InterPro" id="IPR022999">
    <property type="entry name" value="Transaldolase_3B"/>
</dbReference>
<dbReference type="InterPro" id="IPR004731">
    <property type="entry name" value="Transaldolase_3B/F6P_aldolase"/>
</dbReference>
<dbReference type="InterPro" id="IPR018225">
    <property type="entry name" value="Transaldolase_AS"/>
</dbReference>
<dbReference type="InterPro" id="IPR033919">
    <property type="entry name" value="TSA/FSA_arc/bac"/>
</dbReference>
<dbReference type="NCBIfam" id="TIGR00875">
    <property type="entry name" value="fsa_talC_mipB"/>
    <property type="match status" value="1"/>
</dbReference>
<dbReference type="PANTHER" id="PTHR10683">
    <property type="entry name" value="TRANSALDOLASE"/>
    <property type="match status" value="1"/>
</dbReference>
<dbReference type="PANTHER" id="PTHR10683:SF36">
    <property type="entry name" value="TRANSALDOLASE"/>
    <property type="match status" value="1"/>
</dbReference>
<dbReference type="Pfam" id="PF00923">
    <property type="entry name" value="TAL_FSA"/>
    <property type="match status" value="1"/>
</dbReference>
<dbReference type="SUPFAM" id="SSF51569">
    <property type="entry name" value="Aldolase"/>
    <property type="match status" value="1"/>
</dbReference>
<dbReference type="PROSITE" id="PS01054">
    <property type="entry name" value="TRANSALDOLASE_1"/>
    <property type="match status" value="1"/>
</dbReference>
<dbReference type="PROSITE" id="PS00958">
    <property type="entry name" value="TRANSALDOLASE_2"/>
    <property type="match status" value="1"/>
</dbReference>
<accession>A6TK31</accession>
<comment type="function">
    <text evidence="1">Transaldolase is important for the balance of metabolites in the pentose-phosphate pathway.</text>
</comment>
<comment type="catalytic activity">
    <reaction evidence="1">
        <text>D-sedoheptulose 7-phosphate + D-glyceraldehyde 3-phosphate = D-erythrose 4-phosphate + beta-D-fructose 6-phosphate</text>
        <dbReference type="Rhea" id="RHEA:17053"/>
        <dbReference type="ChEBI" id="CHEBI:16897"/>
        <dbReference type="ChEBI" id="CHEBI:57483"/>
        <dbReference type="ChEBI" id="CHEBI:57634"/>
        <dbReference type="ChEBI" id="CHEBI:59776"/>
        <dbReference type="EC" id="2.2.1.2"/>
    </reaction>
</comment>
<comment type="pathway">
    <text evidence="1">Carbohydrate degradation; pentose phosphate pathway; D-glyceraldehyde 3-phosphate and beta-D-fructose 6-phosphate from D-ribose 5-phosphate and D-xylulose 5-phosphate (non-oxidative stage): step 2/3.</text>
</comment>
<comment type="subcellular location">
    <subcellularLocation>
        <location evidence="1">Cytoplasm</location>
    </subcellularLocation>
</comment>
<comment type="similarity">
    <text evidence="1">Belongs to the transaldolase family. Type 3B subfamily.</text>
</comment>
<sequence>MKLFIDTANIEEIKEVAQWGILSGVTTNPSLIAKEGRDFKQVIAEITAIVEGPISAEVVSLQAEEMLKEAQDLVAIHPNVVIKVPMTAEGLKAVKGFSEQGIKTNVTLVFSANQALLAARAGASFVSPFVGRLDDIGQEGSELVRQIIEIYDIHGIETEIIAASIRHTQHLTDAALAGAHIATVPYKVLKQSLLHPLTDQGIEKFLKDWEGLVK</sequence>
<organism>
    <name type="scientific">Alkaliphilus metalliredigens (strain QYMF)</name>
    <dbReference type="NCBI Taxonomy" id="293826"/>
    <lineage>
        <taxon>Bacteria</taxon>
        <taxon>Bacillati</taxon>
        <taxon>Bacillota</taxon>
        <taxon>Clostridia</taxon>
        <taxon>Peptostreptococcales</taxon>
        <taxon>Natronincolaceae</taxon>
        <taxon>Alkaliphilus</taxon>
    </lineage>
</organism>
<proteinExistence type="inferred from homology"/>
<feature type="chain" id="PRO_1000060454" description="Probable transaldolase">
    <location>
        <begin position="1"/>
        <end position="214"/>
    </location>
</feature>
<feature type="active site" description="Schiff-base intermediate with substrate" evidence="1">
    <location>
        <position position="83"/>
    </location>
</feature>
<gene>
    <name evidence="1" type="primary">tal</name>
    <name type="ordered locus">Amet_0319</name>
</gene>
<reference key="1">
    <citation type="journal article" date="2016" name="Genome Announc.">
        <title>Complete genome sequence of Alkaliphilus metalliredigens strain QYMF, an alkaliphilic and metal-reducing bacterium isolated from borax-contaminated leachate ponds.</title>
        <authorList>
            <person name="Hwang C."/>
            <person name="Copeland A."/>
            <person name="Lucas S."/>
            <person name="Lapidus A."/>
            <person name="Barry K."/>
            <person name="Detter J.C."/>
            <person name="Glavina Del Rio T."/>
            <person name="Hammon N."/>
            <person name="Israni S."/>
            <person name="Dalin E."/>
            <person name="Tice H."/>
            <person name="Pitluck S."/>
            <person name="Chertkov O."/>
            <person name="Brettin T."/>
            <person name="Bruce D."/>
            <person name="Han C."/>
            <person name="Schmutz J."/>
            <person name="Larimer F."/>
            <person name="Land M.L."/>
            <person name="Hauser L."/>
            <person name="Kyrpides N."/>
            <person name="Mikhailova N."/>
            <person name="Ye Q."/>
            <person name="Zhou J."/>
            <person name="Richardson P."/>
            <person name="Fields M.W."/>
        </authorList>
    </citation>
    <scope>NUCLEOTIDE SEQUENCE [LARGE SCALE GENOMIC DNA]</scope>
    <source>
        <strain>QYMF</strain>
    </source>
</reference>
<keyword id="KW-0963">Cytoplasm</keyword>
<keyword id="KW-0570">Pentose shunt</keyword>
<keyword id="KW-1185">Reference proteome</keyword>
<keyword id="KW-0704">Schiff base</keyword>
<keyword id="KW-0808">Transferase</keyword>
<protein>
    <recommendedName>
        <fullName evidence="1">Probable transaldolase</fullName>
        <ecNumber evidence="1">2.2.1.2</ecNumber>
    </recommendedName>
</protein>
<evidence type="ECO:0000255" key="1">
    <source>
        <dbReference type="HAMAP-Rule" id="MF_00494"/>
    </source>
</evidence>
<name>TAL_ALKMQ</name>